<keyword id="KW-0963">Cytoplasm</keyword>
<keyword id="KW-1185">Reference proteome</keyword>
<keyword id="KW-0690">Ribosome biogenesis</keyword>
<feature type="chain" id="PRO_0000181955" description="Ribosome maturation factor RimP">
    <location>
        <begin position="1"/>
        <end position="196"/>
    </location>
</feature>
<feature type="region of interest" description="Disordered" evidence="2">
    <location>
        <begin position="164"/>
        <end position="196"/>
    </location>
</feature>
<feature type="compositionally biased region" description="Basic residues" evidence="2">
    <location>
        <begin position="173"/>
        <end position="182"/>
    </location>
</feature>
<evidence type="ECO:0000255" key="1">
    <source>
        <dbReference type="HAMAP-Rule" id="MF_01077"/>
    </source>
</evidence>
<evidence type="ECO:0000256" key="2">
    <source>
        <dbReference type="SAM" id="MobiDB-lite"/>
    </source>
</evidence>
<reference key="1">
    <citation type="journal article" date="2002" name="Nature">
        <title>Comparison of the genomes of two Xanthomonas pathogens with differing host specificities.</title>
        <authorList>
            <person name="da Silva A.C.R."/>
            <person name="Ferro J.A."/>
            <person name="Reinach F.C."/>
            <person name="Farah C.S."/>
            <person name="Furlan L.R."/>
            <person name="Quaggio R.B."/>
            <person name="Monteiro-Vitorello C.B."/>
            <person name="Van Sluys M.A."/>
            <person name="Almeida N.F. Jr."/>
            <person name="Alves L.M.C."/>
            <person name="do Amaral A.M."/>
            <person name="Bertolini M.C."/>
            <person name="Camargo L.E.A."/>
            <person name="Camarotte G."/>
            <person name="Cannavan F."/>
            <person name="Cardozo J."/>
            <person name="Chambergo F."/>
            <person name="Ciapina L.P."/>
            <person name="Cicarelli R.M.B."/>
            <person name="Coutinho L.L."/>
            <person name="Cursino-Santos J.R."/>
            <person name="El-Dorry H."/>
            <person name="Faria J.B."/>
            <person name="Ferreira A.J.S."/>
            <person name="Ferreira R.C.C."/>
            <person name="Ferro M.I.T."/>
            <person name="Formighieri E.F."/>
            <person name="Franco M.C."/>
            <person name="Greggio C.C."/>
            <person name="Gruber A."/>
            <person name="Katsuyama A.M."/>
            <person name="Kishi L.T."/>
            <person name="Leite R.P."/>
            <person name="Lemos E.G.M."/>
            <person name="Lemos M.V.F."/>
            <person name="Locali E.C."/>
            <person name="Machado M.A."/>
            <person name="Madeira A.M.B.N."/>
            <person name="Martinez-Rossi N.M."/>
            <person name="Martins E.C."/>
            <person name="Meidanis J."/>
            <person name="Menck C.F.M."/>
            <person name="Miyaki C.Y."/>
            <person name="Moon D.H."/>
            <person name="Moreira L.M."/>
            <person name="Novo M.T.M."/>
            <person name="Okura V.K."/>
            <person name="Oliveira M.C."/>
            <person name="Oliveira V.R."/>
            <person name="Pereira H.A."/>
            <person name="Rossi A."/>
            <person name="Sena J.A.D."/>
            <person name="Silva C."/>
            <person name="de Souza R.F."/>
            <person name="Spinola L.A.F."/>
            <person name="Takita M.A."/>
            <person name="Tamura R.E."/>
            <person name="Teixeira E.C."/>
            <person name="Tezza R.I.D."/>
            <person name="Trindade dos Santos M."/>
            <person name="Truffi D."/>
            <person name="Tsai S.M."/>
            <person name="White F.F."/>
            <person name="Setubal J.C."/>
            <person name="Kitajima J.P."/>
        </authorList>
    </citation>
    <scope>NUCLEOTIDE SEQUENCE [LARGE SCALE GENOMIC DNA]</scope>
    <source>
        <strain>ATCC 33913 / DSM 3586 / NCPPB 528 / LMG 568 / P 25</strain>
    </source>
</reference>
<comment type="function">
    <text evidence="1">Required for maturation of 30S ribosomal subunits.</text>
</comment>
<comment type="subcellular location">
    <subcellularLocation>
        <location evidence="1">Cytoplasm</location>
    </subcellularLocation>
</comment>
<comment type="similarity">
    <text evidence="1">Belongs to the RimP family.</text>
</comment>
<protein>
    <recommendedName>
        <fullName evidence="1">Ribosome maturation factor RimP</fullName>
    </recommendedName>
</protein>
<sequence>MSEKATEIANLLGPTVESLGLELLGVEYLPAPGGATLRLYIDVPLAEQPDRIINVDDCERVSREVSAQLDVEDPISGNYTLEVSSPGVDRPLFTLDQFARHVGESAKIVLKLAQDGRRRFQGQIVRIDTEAAAVVFSVDGKDVQIGFDNIDKARILPDWVALGLAPQKPNKPGPKKPGHDKKKPSNEPAAGKPRAE</sequence>
<dbReference type="EMBL" id="AE008922">
    <property type="protein sequence ID" value="AAM41787.1"/>
    <property type="molecule type" value="Genomic_DNA"/>
</dbReference>
<dbReference type="RefSeq" id="NP_637863.1">
    <property type="nucleotide sequence ID" value="NC_003902.1"/>
</dbReference>
<dbReference type="RefSeq" id="WP_011037646.1">
    <property type="nucleotide sequence ID" value="NC_003902.1"/>
</dbReference>
<dbReference type="SMR" id="Q8P7U5"/>
<dbReference type="STRING" id="190485.XCC2513"/>
<dbReference type="EnsemblBacteria" id="AAM41787">
    <property type="protein sequence ID" value="AAM41787"/>
    <property type="gene ID" value="XCC2513"/>
</dbReference>
<dbReference type="KEGG" id="xcc:XCC2513"/>
<dbReference type="PATRIC" id="fig|190485.4.peg.2680"/>
<dbReference type="eggNOG" id="COG0779">
    <property type="taxonomic scope" value="Bacteria"/>
</dbReference>
<dbReference type="HOGENOM" id="CLU_070525_1_1_6"/>
<dbReference type="OrthoDB" id="9805006at2"/>
<dbReference type="Proteomes" id="UP000001010">
    <property type="component" value="Chromosome"/>
</dbReference>
<dbReference type="GO" id="GO:0005829">
    <property type="term" value="C:cytosol"/>
    <property type="evidence" value="ECO:0000318"/>
    <property type="project" value="GO_Central"/>
</dbReference>
<dbReference type="GO" id="GO:0000028">
    <property type="term" value="P:ribosomal small subunit assembly"/>
    <property type="evidence" value="ECO:0000318"/>
    <property type="project" value="GO_Central"/>
</dbReference>
<dbReference type="GO" id="GO:0006412">
    <property type="term" value="P:translation"/>
    <property type="evidence" value="ECO:0000318"/>
    <property type="project" value="GO_Central"/>
</dbReference>
<dbReference type="CDD" id="cd01734">
    <property type="entry name" value="YlxS_C"/>
    <property type="match status" value="1"/>
</dbReference>
<dbReference type="FunFam" id="3.30.300.70:FF:000001">
    <property type="entry name" value="Ribosome maturation factor RimP"/>
    <property type="match status" value="1"/>
</dbReference>
<dbReference type="Gene3D" id="2.30.30.180">
    <property type="entry name" value="Ribosome maturation factor RimP, C-terminal domain"/>
    <property type="match status" value="1"/>
</dbReference>
<dbReference type="Gene3D" id="3.30.300.70">
    <property type="entry name" value="RimP-like superfamily, N-terminal"/>
    <property type="match status" value="1"/>
</dbReference>
<dbReference type="HAMAP" id="MF_01077">
    <property type="entry name" value="RimP"/>
    <property type="match status" value="1"/>
</dbReference>
<dbReference type="InterPro" id="IPR003728">
    <property type="entry name" value="Ribosome_maturation_RimP"/>
</dbReference>
<dbReference type="InterPro" id="IPR028998">
    <property type="entry name" value="RimP_C"/>
</dbReference>
<dbReference type="InterPro" id="IPR036847">
    <property type="entry name" value="RimP_C_sf"/>
</dbReference>
<dbReference type="InterPro" id="IPR028989">
    <property type="entry name" value="RimP_N"/>
</dbReference>
<dbReference type="InterPro" id="IPR035956">
    <property type="entry name" value="RimP_N_sf"/>
</dbReference>
<dbReference type="NCBIfam" id="NF000927">
    <property type="entry name" value="PRK00092.1-1"/>
    <property type="match status" value="1"/>
</dbReference>
<dbReference type="NCBIfam" id="NF000931">
    <property type="entry name" value="PRK00092.2-3"/>
    <property type="match status" value="1"/>
</dbReference>
<dbReference type="PANTHER" id="PTHR33867">
    <property type="entry name" value="RIBOSOME MATURATION FACTOR RIMP"/>
    <property type="match status" value="1"/>
</dbReference>
<dbReference type="PANTHER" id="PTHR33867:SF1">
    <property type="entry name" value="RIBOSOME MATURATION FACTOR RIMP"/>
    <property type="match status" value="1"/>
</dbReference>
<dbReference type="Pfam" id="PF17384">
    <property type="entry name" value="DUF150_C"/>
    <property type="match status" value="1"/>
</dbReference>
<dbReference type="Pfam" id="PF02576">
    <property type="entry name" value="RimP_N"/>
    <property type="match status" value="1"/>
</dbReference>
<dbReference type="SUPFAM" id="SSF74942">
    <property type="entry name" value="YhbC-like, C-terminal domain"/>
    <property type="match status" value="1"/>
</dbReference>
<dbReference type="SUPFAM" id="SSF75420">
    <property type="entry name" value="YhbC-like, N-terminal domain"/>
    <property type="match status" value="1"/>
</dbReference>
<organism>
    <name type="scientific">Xanthomonas campestris pv. campestris (strain ATCC 33913 / DSM 3586 / NCPPB 528 / LMG 568 / P 25)</name>
    <dbReference type="NCBI Taxonomy" id="190485"/>
    <lineage>
        <taxon>Bacteria</taxon>
        <taxon>Pseudomonadati</taxon>
        <taxon>Pseudomonadota</taxon>
        <taxon>Gammaproteobacteria</taxon>
        <taxon>Lysobacterales</taxon>
        <taxon>Lysobacteraceae</taxon>
        <taxon>Xanthomonas</taxon>
    </lineage>
</organism>
<proteinExistence type="inferred from homology"/>
<accession>Q8P7U5</accession>
<name>RIMP_XANCP</name>
<gene>
    <name evidence="1" type="primary">rimP</name>
    <name type="ordered locus">XCC2513</name>
</gene>